<organism>
    <name type="scientific">Salmonella typhimurium (strain LT2 / SGSC1412 / ATCC 700720)</name>
    <dbReference type="NCBI Taxonomy" id="99287"/>
    <lineage>
        <taxon>Bacteria</taxon>
        <taxon>Pseudomonadati</taxon>
        <taxon>Pseudomonadota</taxon>
        <taxon>Gammaproteobacteria</taxon>
        <taxon>Enterobacterales</taxon>
        <taxon>Enterobacteriaceae</taxon>
        <taxon>Salmonella</taxon>
    </lineage>
</organism>
<feature type="chain" id="PRO_0000167237" description="Small ribosomal subunit protein bS16">
    <location>
        <begin position="1"/>
        <end position="82"/>
    </location>
</feature>
<protein>
    <recommendedName>
        <fullName evidence="2">Small ribosomal subunit protein bS16</fullName>
    </recommendedName>
    <alternativeName>
        <fullName evidence="3">30S ribosomal protein S16</fullName>
    </alternativeName>
</protein>
<dbReference type="EMBL" id="X74933">
    <property type="protein sequence ID" value="CAA52885.1"/>
    <property type="molecule type" value="Genomic_DNA"/>
</dbReference>
<dbReference type="EMBL" id="AE006468">
    <property type="protein sequence ID" value="AAL21565.1"/>
    <property type="molecule type" value="Genomic_DNA"/>
</dbReference>
<dbReference type="PIR" id="S37173">
    <property type="entry name" value="S37173"/>
</dbReference>
<dbReference type="RefSeq" id="NP_461606.1">
    <property type="nucleotide sequence ID" value="NC_003197.2"/>
</dbReference>
<dbReference type="RefSeq" id="WP_000256453.1">
    <property type="nucleotide sequence ID" value="NC_003197.2"/>
</dbReference>
<dbReference type="SMR" id="P0A2A9"/>
<dbReference type="STRING" id="99287.STM2676"/>
<dbReference type="PaxDb" id="99287-STM2676"/>
<dbReference type="GeneID" id="1254199"/>
<dbReference type="KEGG" id="stm:STM2676"/>
<dbReference type="PATRIC" id="fig|99287.12.peg.2820"/>
<dbReference type="HOGENOM" id="CLU_100590_5_1_6"/>
<dbReference type="OMA" id="GFYNPIA"/>
<dbReference type="PhylomeDB" id="P0A2A9"/>
<dbReference type="BioCyc" id="SENT99287:STM2676-MONOMER"/>
<dbReference type="Proteomes" id="UP000001014">
    <property type="component" value="Chromosome"/>
</dbReference>
<dbReference type="GO" id="GO:0005737">
    <property type="term" value="C:cytoplasm"/>
    <property type="evidence" value="ECO:0007669"/>
    <property type="project" value="UniProtKB-ARBA"/>
</dbReference>
<dbReference type="GO" id="GO:0015935">
    <property type="term" value="C:small ribosomal subunit"/>
    <property type="evidence" value="ECO:0000318"/>
    <property type="project" value="GO_Central"/>
</dbReference>
<dbReference type="GO" id="GO:0004519">
    <property type="term" value="F:endonuclease activity"/>
    <property type="evidence" value="ECO:0007669"/>
    <property type="project" value="UniProtKB-KW"/>
</dbReference>
<dbReference type="GO" id="GO:0003735">
    <property type="term" value="F:structural constituent of ribosome"/>
    <property type="evidence" value="ECO:0000318"/>
    <property type="project" value="GO_Central"/>
</dbReference>
<dbReference type="GO" id="GO:0006412">
    <property type="term" value="P:translation"/>
    <property type="evidence" value="ECO:0007669"/>
    <property type="project" value="UniProtKB-UniRule"/>
</dbReference>
<dbReference type="FunFam" id="3.30.1320.10:FF:000001">
    <property type="entry name" value="30S ribosomal protein S16"/>
    <property type="match status" value="1"/>
</dbReference>
<dbReference type="Gene3D" id="3.30.1320.10">
    <property type="match status" value="1"/>
</dbReference>
<dbReference type="HAMAP" id="MF_00385">
    <property type="entry name" value="Ribosomal_bS16"/>
    <property type="match status" value="1"/>
</dbReference>
<dbReference type="InterPro" id="IPR000307">
    <property type="entry name" value="Ribosomal_bS16"/>
</dbReference>
<dbReference type="InterPro" id="IPR020592">
    <property type="entry name" value="Ribosomal_bS16_CS"/>
</dbReference>
<dbReference type="InterPro" id="IPR023803">
    <property type="entry name" value="Ribosomal_bS16_dom_sf"/>
</dbReference>
<dbReference type="NCBIfam" id="TIGR00002">
    <property type="entry name" value="S16"/>
    <property type="match status" value="1"/>
</dbReference>
<dbReference type="PANTHER" id="PTHR12919">
    <property type="entry name" value="30S RIBOSOMAL PROTEIN S16"/>
    <property type="match status" value="1"/>
</dbReference>
<dbReference type="PANTHER" id="PTHR12919:SF20">
    <property type="entry name" value="SMALL RIBOSOMAL SUBUNIT PROTEIN BS16M"/>
    <property type="match status" value="1"/>
</dbReference>
<dbReference type="Pfam" id="PF00886">
    <property type="entry name" value="Ribosomal_S16"/>
    <property type="match status" value="1"/>
</dbReference>
<dbReference type="SUPFAM" id="SSF54565">
    <property type="entry name" value="Ribosomal protein S16"/>
    <property type="match status" value="1"/>
</dbReference>
<dbReference type="PROSITE" id="PS00732">
    <property type="entry name" value="RIBOSOMAL_S16"/>
    <property type="match status" value="1"/>
</dbReference>
<sequence>MVTIRLARHGAKKRPFYQVVVTDSRNARNGRFIERVGFFNPIASEKEEGTRLDLDRIAHWVGQGATISDRVAALIKEVKKAA</sequence>
<proteinExistence type="inferred from homology"/>
<evidence type="ECO:0000250" key="1"/>
<evidence type="ECO:0000255" key="2">
    <source>
        <dbReference type="HAMAP-Rule" id="MF_00385"/>
    </source>
</evidence>
<evidence type="ECO:0000305" key="3"/>
<gene>
    <name evidence="2" type="primary">rpsP</name>
    <name type="ordered locus">STM2676</name>
</gene>
<accession>P0A2A9</accession>
<accession>P36242</accession>
<keyword id="KW-0255">Endonuclease</keyword>
<keyword id="KW-0378">Hydrolase</keyword>
<keyword id="KW-0540">Nuclease</keyword>
<keyword id="KW-1185">Reference proteome</keyword>
<keyword id="KW-0687">Ribonucleoprotein</keyword>
<keyword id="KW-0689">Ribosomal protein</keyword>
<name>RS16_SALTY</name>
<comment type="function">
    <text evidence="1">In addition to being a ribosomal protein, S16 also has a cation-dependent endonuclease activity.</text>
</comment>
<comment type="similarity">
    <text evidence="2">Belongs to the bacterial ribosomal protein bS16 family.</text>
</comment>
<reference key="1">
    <citation type="submission" date="1993-09" db="EMBL/GenBank/DDBJ databases">
        <authorList>
            <person name="Persson B.C."/>
        </authorList>
    </citation>
    <scope>NUCLEOTIDE SEQUENCE [GENOMIC DNA]</scope>
    <source>
        <strain>LT2</strain>
    </source>
</reference>
<reference key="2">
    <citation type="journal article" date="2001" name="Nature">
        <title>Complete genome sequence of Salmonella enterica serovar Typhimurium LT2.</title>
        <authorList>
            <person name="McClelland M."/>
            <person name="Sanderson K.E."/>
            <person name="Spieth J."/>
            <person name="Clifton S.W."/>
            <person name="Latreille P."/>
            <person name="Courtney L."/>
            <person name="Porwollik S."/>
            <person name="Ali J."/>
            <person name="Dante M."/>
            <person name="Du F."/>
            <person name="Hou S."/>
            <person name="Layman D."/>
            <person name="Leonard S."/>
            <person name="Nguyen C."/>
            <person name="Scott K."/>
            <person name="Holmes A."/>
            <person name="Grewal N."/>
            <person name="Mulvaney E."/>
            <person name="Ryan E."/>
            <person name="Sun H."/>
            <person name="Florea L."/>
            <person name="Miller W."/>
            <person name="Stoneking T."/>
            <person name="Nhan M."/>
            <person name="Waterston R."/>
            <person name="Wilson R.K."/>
        </authorList>
    </citation>
    <scope>NUCLEOTIDE SEQUENCE [LARGE SCALE GENOMIC DNA]</scope>
    <source>
        <strain>LT2 / SGSC1412 / ATCC 700720</strain>
    </source>
</reference>